<organism>
    <name type="scientific">Influenza A virus (strain A/Japan/305/1957 H2N2)</name>
    <dbReference type="NCBI Taxonomy" id="387161"/>
    <lineage>
        <taxon>Viruses</taxon>
        <taxon>Riboviria</taxon>
        <taxon>Orthornavirae</taxon>
        <taxon>Negarnaviricota</taxon>
        <taxon>Polyploviricotina</taxon>
        <taxon>Insthoviricetes</taxon>
        <taxon>Articulavirales</taxon>
        <taxon>Orthomyxoviridae</taxon>
        <taxon>Alphainfluenzavirus</taxon>
        <taxon>Alphainfluenzavirus influenzae</taxon>
        <taxon>Influenza A virus</taxon>
    </lineage>
</organism>
<comment type="function">
    <text evidence="1">RNA-dependent RNA polymerase which is responsible for replication and transcription of virus RNA segments. The transcription of viral mRNAs occurs by a unique mechanism called cap-snatching. 5' methylated caps of cellular mRNAs are cleaved after 10-13 nucleotides by PA. In turn, these short capped RNAs are used as primers by PB1 for transcription of viral mRNAs. During virus replication, PB1 initiates RNA synthesis and copy vRNA into complementary RNA (cRNA) which in turn serves as a template for the production of more vRNAs.</text>
</comment>
<comment type="catalytic activity">
    <reaction evidence="1">
        <text>RNA(n) + a ribonucleoside 5'-triphosphate = RNA(n+1) + diphosphate</text>
        <dbReference type="Rhea" id="RHEA:21248"/>
        <dbReference type="Rhea" id="RHEA-COMP:14527"/>
        <dbReference type="Rhea" id="RHEA-COMP:17342"/>
        <dbReference type="ChEBI" id="CHEBI:33019"/>
        <dbReference type="ChEBI" id="CHEBI:61557"/>
        <dbReference type="ChEBI" id="CHEBI:140395"/>
        <dbReference type="EC" id="2.7.7.48"/>
    </reaction>
</comment>
<comment type="subunit">
    <text evidence="1">Influenza RNA polymerase is composed of three subunits: PB1, PB2 and PA. Interacts (via N-terminus) with PA (via C-terminus). Interacts (via C-terminus) with PB2 (via N-terminus); this interaction is essential for transcription initiation.</text>
</comment>
<comment type="subcellular location">
    <subcellularLocation>
        <location evidence="1">Host nucleus</location>
    </subcellularLocation>
    <subcellularLocation>
        <location evidence="1">Host cytoplasm</location>
    </subcellularLocation>
</comment>
<comment type="PTM">
    <text evidence="1">Phosphorylated by host PRKCA.</text>
</comment>
<comment type="similarity">
    <text evidence="1">Belongs to the influenza viruses polymerase PB1 family.</text>
</comment>
<dbReference type="EC" id="2.7.7.48" evidence="1"/>
<dbReference type="EMBL" id="DQ508839">
    <property type="protein sequence ID" value="ABF21242.1"/>
    <property type="molecule type" value="Genomic_RNA"/>
</dbReference>
<dbReference type="SMR" id="Q1K9Q5"/>
<dbReference type="Proteomes" id="UP000118104">
    <property type="component" value="Genome"/>
</dbReference>
<dbReference type="GO" id="GO:0030430">
    <property type="term" value="C:host cell cytoplasm"/>
    <property type="evidence" value="ECO:0007669"/>
    <property type="project" value="UniProtKB-SubCell"/>
</dbReference>
<dbReference type="GO" id="GO:0042025">
    <property type="term" value="C:host cell nucleus"/>
    <property type="evidence" value="ECO:0007669"/>
    <property type="project" value="UniProtKB-SubCell"/>
</dbReference>
<dbReference type="GO" id="GO:0000166">
    <property type="term" value="F:nucleotide binding"/>
    <property type="evidence" value="ECO:0007669"/>
    <property type="project" value="UniProtKB-UniRule"/>
</dbReference>
<dbReference type="GO" id="GO:0003723">
    <property type="term" value="F:RNA binding"/>
    <property type="evidence" value="ECO:0007669"/>
    <property type="project" value="InterPro"/>
</dbReference>
<dbReference type="GO" id="GO:0003968">
    <property type="term" value="F:RNA-directed RNA polymerase activity"/>
    <property type="evidence" value="ECO:0007669"/>
    <property type="project" value="UniProtKB-UniRule"/>
</dbReference>
<dbReference type="GO" id="GO:0006351">
    <property type="term" value="P:DNA-templated transcription"/>
    <property type="evidence" value="ECO:0007669"/>
    <property type="project" value="UniProtKB-UniRule"/>
</dbReference>
<dbReference type="GO" id="GO:0039657">
    <property type="term" value="P:symbiont-mediated suppression of host gene expression"/>
    <property type="evidence" value="ECO:0007669"/>
    <property type="project" value="UniProtKB-KW"/>
</dbReference>
<dbReference type="GO" id="GO:0039523">
    <property type="term" value="P:symbiont-mediated suppression of host mRNA transcription via inhibition of RNA polymerase II activity"/>
    <property type="evidence" value="ECO:0007669"/>
    <property type="project" value="UniProtKB-UniRule"/>
</dbReference>
<dbReference type="GO" id="GO:0039694">
    <property type="term" value="P:viral RNA genome replication"/>
    <property type="evidence" value="ECO:0007669"/>
    <property type="project" value="UniProtKB-UniRule"/>
</dbReference>
<dbReference type="GO" id="GO:0019083">
    <property type="term" value="P:viral transcription"/>
    <property type="evidence" value="ECO:0007669"/>
    <property type="project" value="UniProtKB-KW"/>
</dbReference>
<dbReference type="Gene3D" id="6.10.140.720">
    <property type="match status" value="1"/>
</dbReference>
<dbReference type="HAMAP" id="MF_04065">
    <property type="entry name" value="INFV_RDRP"/>
    <property type="match status" value="1"/>
</dbReference>
<dbReference type="InterPro" id="IPR007099">
    <property type="entry name" value="RNA-dir_pol_NSvirus"/>
</dbReference>
<dbReference type="InterPro" id="IPR001407">
    <property type="entry name" value="RNA_pol_PB1_influenza"/>
</dbReference>
<dbReference type="Pfam" id="PF00602">
    <property type="entry name" value="Flu_PB1"/>
    <property type="match status" value="1"/>
</dbReference>
<dbReference type="PIRSF" id="PIRSF000827">
    <property type="entry name" value="RdRPol_OMV"/>
    <property type="match status" value="1"/>
</dbReference>
<dbReference type="PROSITE" id="PS50525">
    <property type="entry name" value="RDRP_SSRNA_NEG_SEG"/>
    <property type="match status" value="1"/>
</dbReference>
<name>RDRP_I57A0</name>
<keyword id="KW-1262">Eukaryotic host gene expression shutoff by virus</keyword>
<keyword id="KW-1191">Eukaryotic host transcription shutoff by virus</keyword>
<keyword id="KW-1035">Host cytoplasm</keyword>
<keyword id="KW-1190">Host gene expression shutoff by virus</keyword>
<keyword id="KW-1048">Host nucleus</keyword>
<keyword id="KW-0945">Host-virus interaction</keyword>
<keyword id="KW-1104">Inhibition of host RNA polymerase II by virus</keyword>
<keyword id="KW-0547">Nucleotide-binding</keyword>
<keyword id="KW-0548">Nucleotidyltransferase</keyword>
<keyword id="KW-0597">Phosphoprotein</keyword>
<keyword id="KW-0696">RNA-directed RNA polymerase</keyword>
<keyword id="KW-0808">Transferase</keyword>
<keyword id="KW-0693">Viral RNA replication</keyword>
<keyword id="KW-1195">Viral transcription</keyword>
<sequence length="757" mass="86436">MDVNPTLLFLKVPAQNAISTTFPYTGDPPYSHGTGTGYTMDTVNRTHQYSEKGKWTTNTETGAPQLNPIDGPLPEDNEPSGYAQTDCVLEAMAFLEESHPGIFENSCLETMEVIQQTRVDKLTQGRQTYDWTLNRNQPAATALANTIEVFRSNGLTANESGRLIDFLKDVIESMDKEEMEITTHFQRKRRVRDNMTKKMVTQRTIGKKKQRLNKRSYLIRALTLNTMTKDAERGKLKRRAIATPGMQIRGFVYFVETLARSICEKLEQSGLPVGGNEKKAKLANVVRKMMTNSQDTELSFTITGDNTKWNENQNPRMFLAMITYITRNQPEWFRNVLSIAPIMFSNKMARLGKGYMFESKSMKLRTQIPAEMLASIDLKYFNESTRKKIEKIRPLLIDGTVSLSPGMMMGMFNMLSTVLGVSILNLGQKKYTKTTYWWDGLQSSDDFALILNAPNHEGIQAGVDRFYRTCKLVGINMSKKKSYINRTGTFEFTSFFYRYGFVANFSMELPSFGVSGINESADMSIGVTVIKNNMINNDLGPATAQMALQLFIKDYRYTYRCHRGDTQIQTRRSFELKKLWEQTRSKAGLLVSDGGPNLYNIRNLHIPEVCLKWELMDEDYQGRLCNPLNPFVSHKEIESVNNAVVMPAHGPAKSMEYDAVATTHSWIPKRNRSILNTSQRGILEDEQMYQKCCNLFEKFFPSSSYRRPVGISSMVEAMVSRARIDARIDFESGRIKKEEFAEIMKICSTIEELRRQK</sequence>
<feature type="chain" id="PRO_0000279601" description="RNA-directed RNA polymerase catalytic subunit">
    <location>
        <begin position="1"/>
        <end position="757"/>
    </location>
</feature>
<feature type="domain" description="RdRp catalytic" evidence="1">
    <location>
        <begin position="286"/>
        <end position="483"/>
    </location>
</feature>
<feature type="region of interest" description="Disordered" evidence="2">
    <location>
        <begin position="50"/>
        <end position="82"/>
    </location>
</feature>
<feature type="region of interest" description="Promoter-binding site" evidence="1">
    <location>
        <begin position="249"/>
        <end position="256"/>
    </location>
</feature>
<feature type="short sequence motif" description="Nuclear localization signal" evidence="1">
    <location>
        <begin position="187"/>
        <end position="195"/>
    </location>
</feature>
<feature type="short sequence motif" description="Nuclear localization signal" evidence="1">
    <location>
        <begin position="203"/>
        <end position="216"/>
    </location>
</feature>
<feature type="compositionally biased region" description="Polar residues" evidence="2">
    <location>
        <begin position="55"/>
        <end position="64"/>
    </location>
</feature>
<evidence type="ECO:0000255" key="1">
    <source>
        <dbReference type="HAMAP-Rule" id="MF_04065"/>
    </source>
</evidence>
<evidence type="ECO:0000256" key="2">
    <source>
        <dbReference type="SAM" id="MobiDB-lite"/>
    </source>
</evidence>
<protein>
    <recommendedName>
        <fullName evidence="1">RNA-directed RNA polymerase catalytic subunit</fullName>
        <ecNumber evidence="1">2.7.7.48</ecNumber>
    </recommendedName>
    <alternativeName>
        <fullName evidence="1">Polymerase basic protein 1</fullName>
        <shortName evidence="1">PB1</shortName>
    </alternativeName>
    <alternativeName>
        <fullName evidence="1">RNA-directed RNA polymerase subunit P1</fullName>
    </alternativeName>
</protein>
<gene>
    <name evidence="1" type="primary">PB1</name>
</gene>
<reference key="1">
    <citation type="submission" date="2006-04" db="EMBL/GenBank/DDBJ databases">
        <title>Complete genome sequencing and analysis of selected influenza virus vaccine strains spanning six decades (1933-1999).</title>
        <authorList>
            <person name="Mbawuike I.N."/>
            <person name="Zhang Y."/>
            <person name="Yamada R.E."/>
            <person name="Nino D."/>
            <person name="Bui H.-H."/>
            <person name="Sette A."/>
            <person name="Couch R.B."/>
        </authorList>
    </citation>
    <scope>NUCLEOTIDE SEQUENCE [GENOMIC RNA]</scope>
</reference>
<accession>Q1K9Q5</accession>
<proteinExistence type="inferred from homology"/>
<organismHost>
    <name type="scientific">Aves</name>
    <dbReference type="NCBI Taxonomy" id="8782"/>
</organismHost>
<organismHost>
    <name type="scientific">Homo sapiens</name>
    <name type="common">Human</name>
    <dbReference type="NCBI Taxonomy" id="9606"/>
</organismHost>